<protein>
    <recommendedName>
        <fullName evidence="5">Potassium channel toxin alpha-KTx 26.3</fullName>
    </recommendedName>
    <alternativeName>
        <fullName evidence="5">Toxin Mgib2</fullName>
    </alternativeName>
</protein>
<proteinExistence type="inferred from homology"/>
<evidence type="ECO:0000250" key="1"/>
<evidence type="ECO:0000250" key="2">
    <source>
        <dbReference type="UniProtKB" id="A7KJJ7"/>
    </source>
</evidence>
<evidence type="ECO:0000250" key="3">
    <source>
        <dbReference type="UniProtKB" id="P0DL65"/>
    </source>
</evidence>
<evidence type="ECO:0000255" key="4"/>
<evidence type="ECO:0000303" key="5">
    <source>
    </source>
</evidence>
<evidence type="ECO:0000305" key="6"/>
<accession>A0A059UI21</accession>
<comment type="function">
    <text evidence="2">Recombinant toxin that reversibly inhibits the potassium current of mKv1.3/KCNA3 channel stably expressed in COS7 cells (IC(50)=150 nM).</text>
</comment>
<comment type="subcellular location">
    <subcellularLocation>
        <location evidence="1">Secreted</location>
    </subcellularLocation>
</comment>
<comment type="tissue specificity">
    <text evidence="6">Expressed by the venom gland.</text>
</comment>
<comment type="domain">
    <text evidence="6">Has the structural arrangement of an alpha-helix connected to antiparallel beta-sheets by disulfide bonds (CS-alpha/beta).</text>
</comment>
<comment type="similarity">
    <text evidence="6">Belongs to the short scorpion toxin superfamily. Potassium channel inhibitor family. Alpha-KTx 26 subfamily.</text>
</comment>
<feature type="signal peptide" evidence="4">
    <location>
        <begin position="1"/>
        <end position="15"/>
    </location>
</feature>
<feature type="propeptide" id="PRO_0000433147" evidence="6">
    <location>
        <begin position="16"/>
        <end position="24"/>
    </location>
</feature>
<feature type="chain" id="PRO_0000433148" description="Potassium channel toxin alpha-KTx 26.3">
    <location>
        <begin position="25"/>
        <end position="57"/>
    </location>
</feature>
<feature type="site" description="Basic residue of the functional dyad" evidence="6">
    <location>
        <position position="47"/>
    </location>
</feature>
<feature type="site" description="Aromatic residue of the functional dyad" evidence="6">
    <location>
        <position position="56"/>
    </location>
</feature>
<feature type="disulfide bond" evidence="3">
    <location>
        <begin position="30"/>
        <end position="48"/>
    </location>
</feature>
<feature type="disulfide bond" evidence="3">
    <location>
        <begin position="34"/>
        <end position="53"/>
    </location>
</feature>
<feature type="disulfide bond" evidence="3">
    <location>
        <begin position="38"/>
        <end position="55"/>
    </location>
</feature>
<reference key="1">
    <citation type="journal article" date="2014" name="BMC Genomics">
        <title>The Mediterranean scorpion Mesobuthus gibbosus (Scorpiones, Buthidae): transcriptome analysis and organization of the genome encoding chlorotoxin-like peptides.</title>
        <authorList>
            <person name="Diego-Garcia E."/>
            <person name="Caliskan F."/>
            <person name="Tytgat J."/>
        </authorList>
    </citation>
    <scope>NUCLEOTIDE SEQUENCE [MRNA]</scope>
    <scope>NOMENCLATURE</scope>
    <source>
        <tissue>Venom gland</tissue>
    </source>
</reference>
<organism>
    <name type="scientific">Mesobuthus gibbosus</name>
    <name type="common">Mediterranean checkered scorpion</name>
    <name type="synonym">Buthus gibbosus</name>
    <dbReference type="NCBI Taxonomy" id="123226"/>
    <lineage>
        <taxon>Eukaryota</taxon>
        <taxon>Metazoa</taxon>
        <taxon>Ecdysozoa</taxon>
        <taxon>Arthropoda</taxon>
        <taxon>Chelicerata</taxon>
        <taxon>Arachnida</taxon>
        <taxon>Scorpiones</taxon>
        <taxon>Buthida</taxon>
        <taxon>Buthoidea</taxon>
        <taxon>Buthidae</taxon>
        <taxon>Mesobuthus</taxon>
    </lineage>
</organism>
<name>KA263_MESGB</name>
<keyword id="KW-1015">Disulfide bond</keyword>
<keyword id="KW-0872">Ion channel impairing toxin</keyword>
<keyword id="KW-0528">Neurotoxin</keyword>
<keyword id="KW-0632">Potassium channel impairing toxin</keyword>
<keyword id="KW-0964">Secreted</keyword>
<keyword id="KW-0732">Signal</keyword>
<keyword id="KW-0800">Toxin</keyword>
<dbReference type="EMBL" id="KF770809">
    <property type="protein sequence ID" value="AHZ63118.1"/>
    <property type="molecule type" value="mRNA"/>
</dbReference>
<dbReference type="SMR" id="A0A059UI21"/>
<dbReference type="GO" id="GO:0005576">
    <property type="term" value="C:extracellular region"/>
    <property type="evidence" value="ECO:0007669"/>
    <property type="project" value="UniProtKB-SubCell"/>
</dbReference>
<dbReference type="GO" id="GO:0015459">
    <property type="term" value="F:potassium channel regulator activity"/>
    <property type="evidence" value="ECO:0007669"/>
    <property type="project" value="UniProtKB-KW"/>
</dbReference>
<dbReference type="GO" id="GO:0090729">
    <property type="term" value="F:toxin activity"/>
    <property type="evidence" value="ECO:0007669"/>
    <property type="project" value="UniProtKB-KW"/>
</dbReference>
<dbReference type="InterPro" id="IPR036574">
    <property type="entry name" value="Scorpion_toxin-like_sf"/>
</dbReference>
<dbReference type="SUPFAM" id="SSF57095">
    <property type="entry name" value="Scorpion toxin-like"/>
    <property type="match status" value="1"/>
</dbReference>
<dbReference type="PROSITE" id="PS01138">
    <property type="entry name" value="SCORP_SHORT_TOXIN"/>
    <property type="match status" value="1"/>
</dbReference>
<sequence>MSGLSVFILIALVLSVIIDVLNNSKVEAACKENCRQYCQAKGARNGKCINSNCKCYY</sequence>